<accession>F4HZB9</accession>
<accession>Q9SA59</accession>
<reference key="1">
    <citation type="journal article" date="2000" name="Nature">
        <title>Sequence and analysis of chromosome 1 of the plant Arabidopsis thaliana.</title>
        <authorList>
            <person name="Theologis A."/>
            <person name="Ecker J.R."/>
            <person name="Palm C.J."/>
            <person name="Federspiel N.A."/>
            <person name="Kaul S."/>
            <person name="White O."/>
            <person name="Alonso J."/>
            <person name="Altafi H."/>
            <person name="Araujo R."/>
            <person name="Bowman C.L."/>
            <person name="Brooks S.Y."/>
            <person name="Buehler E."/>
            <person name="Chan A."/>
            <person name="Chao Q."/>
            <person name="Chen H."/>
            <person name="Cheuk R.F."/>
            <person name="Chin C.W."/>
            <person name="Chung M.K."/>
            <person name="Conn L."/>
            <person name="Conway A.B."/>
            <person name="Conway A.R."/>
            <person name="Creasy T.H."/>
            <person name="Dewar K."/>
            <person name="Dunn P."/>
            <person name="Etgu P."/>
            <person name="Feldblyum T.V."/>
            <person name="Feng J.-D."/>
            <person name="Fong B."/>
            <person name="Fujii C.Y."/>
            <person name="Gill J.E."/>
            <person name="Goldsmith A.D."/>
            <person name="Haas B."/>
            <person name="Hansen N.F."/>
            <person name="Hughes B."/>
            <person name="Huizar L."/>
            <person name="Hunter J.L."/>
            <person name="Jenkins J."/>
            <person name="Johnson-Hopson C."/>
            <person name="Khan S."/>
            <person name="Khaykin E."/>
            <person name="Kim C.J."/>
            <person name="Koo H.L."/>
            <person name="Kremenetskaia I."/>
            <person name="Kurtz D.B."/>
            <person name="Kwan A."/>
            <person name="Lam B."/>
            <person name="Langin-Hooper S."/>
            <person name="Lee A."/>
            <person name="Lee J.M."/>
            <person name="Lenz C.A."/>
            <person name="Li J.H."/>
            <person name="Li Y.-P."/>
            <person name="Lin X."/>
            <person name="Liu S.X."/>
            <person name="Liu Z.A."/>
            <person name="Luros J.S."/>
            <person name="Maiti R."/>
            <person name="Marziali A."/>
            <person name="Militscher J."/>
            <person name="Miranda M."/>
            <person name="Nguyen M."/>
            <person name="Nierman W.C."/>
            <person name="Osborne B.I."/>
            <person name="Pai G."/>
            <person name="Peterson J."/>
            <person name="Pham P.K."/>
            <person name="Rizzo M."/>
            <person name="Rooney T."/>
            <person name="Rowley D."/>
            <person name="Sakano H."/>
            <person name="Salzberg S.L."/>
            <person name="Schwartz J.R."/>
            <person name="Shinn P."/>
            <person name="Southwick A.M."/>
            <person name="Sun H."/>
            <person name="Tallon L.J."/>
            <person name="Tambunga G."/>
            <person name="Toriumi M.J."/>
            <person name="Town C.D."/>
            <person name="Utterback T."/>
            <person name="Van Aken S."/>
            <person name="Vaysberg M."/>
            <person name="Vysotskaia V.S."/>
            <person name="Walker M."/>
            <person name="Wu D."/>
            <person name="Yu G."/>
            <person name="Fraser C.M."/>
            <person name="Venter J.C."/>
            <person name="Davis R.W."/>
        </authorList>
    </citation>
    <scope>NUCLEOTIDE SEQUENCE [LARGE SCALE GENOMIC DNA]</scope>
    <source>
        <strain>cv. Columbia</strain>
    </source>
</reference>
<reference key="2">
    <citation type="journal article" date="2017" name="Plant J.">
        <title>Araport11: a complete reannotation of the Arabidopsis thaliana reference genome.</title>
        <authorList>
            <person name="Cheng C.Y."/>
            <person name="Krishnakumar V."/>
            <person name="Chan A.P."/>
            <person name="Thibaud-Nissen F."/>
            <person name="Schobel S."/>
            <person name="Town C.D."/>
        </authorList>
    </citation>
    <scope>GENOME REANNOTATION</scope>
    <source>
        <strain>cv. Columbia</strain>
    </source>
</reference>
<reference key="3">
    <citation type="journal article" date="2013" name="Plant Mol. Biol.">
        <title>Coexpression patterns indicate that GPI-anchored non-specific lipid transfer proteins are involved in accumulation of cuticular wax, suberin and sporopollenin.</title>
        <authorList>
            <person name="Edstam M.M."/>
            <person name="Blomqvist K."/>
            <person name="Ekloef A."/>
            <person name="Wennergren U."/>
            <person name="Edqvist J."/>
        </authorList>
    </citation>
    <scope>GENE FAMILY</scope>
    <scope>NOMENCLATURE</scope>
    <source>
        <strain>cv. Columbia</strain>
    </source>
</reference>
<feature type="signal peptide" evidence="3">
    <location>
        <begin position="1"/>
        <end position="18"/>
    </location>
</feature>
<feature type="chain" id="PRO_0000451649" description="Non-specific lipid transfer protein GPI-anchored 19">
    <location>
        <begin position="19"/>
        <end position="147"/>
    </location>
</feature>
<feature type="propeptide" id="PRO_0000451650" description="Removed in mature form" evidence="3">
    <location>
        <begin position="148"/>
        <end position="171"/>
    </location>
</feature>
<feature type="region of interest" description="Disordered" evidence="5">
    <location>
        <begin position="113"/>
        <end position="149"/>
    </location>
</feature>
<feature type="compositionally biased region" description="Low complexity" evidence="5">
    <location>
        <begin position="118"/>
        <end position="141"/>
    </location>
</feature>
<feature type="lipid moiety-binding region" description="GPI-anchor amidated serine" evidence="3">
    <location>
        <position position="147"/>
    </location>
</feature>
<feature type="glycosylation site" description="N-linked (GlcNAc...) asparagine" evidence="4">
    <location>
        <position position="72"/>
    </location>
</feature>
<feature type="glycosylation site" description="N-linked (GlcNAc...) asparagine" evidence="4">
    <location>
        <position position="82"/>
    </location>
</feature>
<feature type="glycosylation site" description="N-linked (GlcNAc...) asparagine" evidence="4">
    <location>
        <position position="148"/>
    </location>
</feature>
<feature type="disulfide bond" evidence="1">
    <location>
        <begin position="25"/>
        <end position="66"/>
    </location>
</feature>
<feature type="disulfide bond" evidence="1">
    <location>
        <begin position="35"/>
        <end position="50"/>
    </location>
</feature>
<feature type="disulfide bond" evidence="1">
    <location>
        <begin position="51"/>
        <end position="93"/>
    </location>
</feature>
<feature type="disulfide bond" evidence="1">
    <location>
        <begin position="64"/>
        <end position="103"/>
    </location>
</feature>
<evidence type="ECO:0000250" key="1">
    <source>
        <dbReference type="UniProtKB" id="A0A0B4JDK1"/>
    </source>
</evidence>
<evidence type="ECO:0000250" key="2">
    <source>
        <dbReference type="UniProtKB" id="Q9C7F7"/>
    </source>
</evidence>
<evidence type="ECO:0000255" key="3"/>
<evidence type="ECO:0000255" key="4">
    <source>
        <dbReference type="PROSITE-ProRule" id="PRU00498"/>
    </source>
</evidence>
<evidence type="ECO:0000256" key="5">
    <source>
        <dbReference type="SAM" id="MobiDB-lite"/>
    </source>
</evidence>
<evidence type="ECO:0000303" key="6">
    <source>
    </source>
</evidence>
<evidence type="ECO:0000305" key="7"/>
<evidence type="ECO:0000312" key="8">
    <source>
        <dbReference type="Araport" id="AT1G03103"/>
    </source>
</evidence>
<evidence type="ECO:0000312" key="9">
    <source>
        <dbReference type="EMBL" id="AAD25798.1"/>
    </source>
</evidence>
<sequence length="171" mass="17664">MILAILALVIATFLYGGATTVQAGCRDTLTSLSPCLYYLNGGSSSPSWSCCRQFSTVVQSSPECLCSVVNSNESSFYGFKFNRTLALNLPTACNVQTPSPSLCNTGGNVPTTLPANTPVGSPRSAPSPSGTTSPANTPSGSKKFPLSNESSSKSNVIILSFVSIALVLAII</sequence>
<dbReference type="EMBL" id="AC006550">
    <property type="protein sequence ID" value="AAD25798.1"/>
    <property type="status" value="ALT_SEQ"/>
    <property type="molecule type" value="Genomic_DNA"/>
</dbReference>
<dbReference type="EMBL" id="CP002684">
    <property type="protein sequence ID" value="AEE27530.1"/>
    <property type="molecule type" value="Genomic_DNA"/>
</dbReference>
<dbReference type="PIR" id="A86162">
    <property type="entry name" value="A86162"/>
</dbReference>
<dbReference type="RefSeq" id="NP_973749.1">
    <property type="nucleotide sequence ID" value="NM_202020.1"/>
</dbReference>
<dbReference type="STRING" id="3702.F4HZB9"/>
<dbReference type="GlyCosmos" id="F4HZB9">
    <property type="glycosylation" value="3 sites, No reported glycans"/>
</dbReference>
<dbReference type="GlyGen" id="F4HZB9">
    <property type="glycosylation" value="3 sites"/>
</dbReference>
<dbReference type="PaxDb" id="3702-AT1G03103.1"/>
<dbReference type="EnsemblPlants" id="AT1G03103.1">
    <property type="protein sequence ID" value="AT1G03103.1"/>
    <property type="gene ID" value="AT1G03103"/>
</dbReference>
<dbReference type="GeneID" id="2745739"/>
<dbReference type="Gramene" id="AT1G03103.1">
    <property type="protein sequence ID" value="AT1G03103.1"/>
    <property type="gene ID" value="AT1G03103"/>
</dbReference>
<dbReference type="KEGG" id="ath:AT1G03103"/>
<dbReference type="Araport" id="AT1G03103"/>
<dbReference type="TAIR" id="AT1G03103">
    <property type="gene designation" value="LTPG19"/>
</dbReference>
<dbReference type="eggNOG" id="ENOG502S0AW">
    <property type="taxonomic scope" value="Eukaryota"/>
</dbReference>
<dbReference type="HOGENOM" id="CLU_089796_3_0_1"/>
<dbReference type="InParanoid" id="F4HZB9"/>
<dbReference type="OMA" id="AGMTDNK"/>
<dbReference type="OrthoDB" id="911994at2759"/>
<dbReference type="PRO" id="PR:F4HZB9"/>
<dbReference type="Proteomes" id="UP000006548">
    <property type="component" value="Chromosome 1"/>
</dbReference>
<dbReference type="ExpressionAtlas" id="F4HZB9">
    <property type="expression patterns" value="baseline and differential"/>
</dbReference>
<dbReference type="GO" id="GO:0005886">
    <property type="term" value="C:plasma membrane"/>
    <property type="evidence" value="ECO:0007669"/>
    <property type="project" value="UniProtKB-SubCell"/>
</dbReference>
<dbReference type="GO" id="GO:0098552">
    <property type="term" value="C:side of membrane"/>
    <property type="evidence" value="ECO:0007669"/>
    <property type="project" value="UniProtKB-KW"/>
</dbReference>
<dbReference type="CDD" id="cd00010">
    <property type="entry name" value="AAI_LTSS"/>
    <property type="match status" value="1"/>
</dbReference>
<dbReference type="Gene3D" id="1.10.110.10">
    <property type="entry name" value="Plant lipid-transfer and hydrophobic proteins"/>
    <property type="match status" value="1"/>
</dbReference>
<dbReference type="InterPro" id="IPR036312">
    <property type="entry name" value="Bifun_inhib/LTP/seed_sf"/>
</dbReference>
<dbReference type="InterPro" id="IPR016140">
    <property type="entry name" value="Bifunc_inhib/LTP/seed_store"/>
</dbReference>
<dbReference type="InterPro" id="IPR043325">
    <property type="entry name" value="LTSS"/>
</dbReference>
<dbReference type="PANTHER" id="PTHR33044">
    <property type="entry name" value="BIFUNCTIONAL INHIBITOR/LIPID-TRANSFER PROTEIN/SEED STORAGE 2S ALBUMIN SUPERFAMILY PROTEIN-RELATED"/>
    <property type="match status" value="1"/>
</dbReference>
<dbReference type="Pfam" id="PF14368">
    <property type="entry name" value="LTP_2"/>
    <property type="match status" value="1"/>
</dbReference>
<dbReference type="SMART" id="SM00499">
    <property type="entry name" value="AAI"/>
    <property type="match status" value="1"/>
</dbReference>
<dbReference type="SUPFAM" id="SSF47699">
    <property type="entry name" value="Bifunctional inhibitor/lipid-transfer protein/seed storage 2S albumin"/>
    <property type="match status" value="1"/>
</dbReference>
<comment type="function">
    <text evidence="2">Probable lipid transfer protein.</text>
</comment>
<comment type="subcellular location">
    <subcellularLocation>
        <location evidence="3">Cell membrane</location>
        <topology evidence="3">Lipid-anchor</topology>
        <topology evidence="3">GPI-anchor</topology>
    </subcellularLocation>
</comment>
<comment type="similarity">
    <text evidence="7">Belongs to the plant LTP family.</text>
</comment>
<comment type="sequence caution" evidence="7">
    <conflict type="erroneous gene model prediction">
        <sequence resource="EMBL-CDS" id="AAD25798"/>
    </conflict>
</comment>
<protein>
    <recommendedName>
        <fullName evidence="6">Non-specific lipid transfer protein GPI-anchored 19</fullName>
        <shortName evidence="6">AtLTPG-19</shortName>
        <shortName evidence="6">Protein LTP-GPI-ANCHORED 19</shortName>
    </recommendedName>
</protein>
<name>LTG19_ARATH</name>
<keyword id="KW-1003">Cell membrane</keyword>
<keyword id="KW-1015">Disulfide bond</keyword>
<keyword id="KW-0325">Glycoprotein</keyword>
<keyword id="KW-0336">GPI-anchor</keyword>
<keyword id="KW-0449">Lipoprotein</keyword>
<keyword id="KW-0472">Membrane</keyword>
<keyword id="KW-1185">Reference proteome</keyword>
<keyword id="KW-0732">Signal</keyword>
<gene>
    <name evidence="6" type="primary">LTPG19</name>
    <name evidence="8" type="ordered locus">At1g03103</name>
    <name evidence="9" type="ORF">F10O3.7</name>
</gene>
<proteinExistence type="inferred from homology"/>
<organism>
    <name type="scientific">Arabidopsis thaliana</name>
    <name type="common">Mouse-ear cress</name>
    <dbReference type="NCBI Taxonomy" id="3702"/>
    <lineage>
        <taxon>Eukaryota</taxon>
        <taxon>Viridiplantae</taxon>
        <taxon>Streptophyta</taxon>
        <taxon>Embryophyta</taxon>
        <taxon>Tracheophyta</taxon>
        <taxon>Spermatophyta</taxon>
        <taxon>Magnoliopsida</taxon>
        <taxon>eudicotyledons</taxon>
        <taxon>Gunneridae</taxon>
        <taxon>Pentapetalae</taxon>
        <taxon>rosids</taxon>
        <taxon>malvids</taxon>
        <taxon>Brassicales</taxon>
        <taxon>Brassicaceae</taxon>
        <taxon>Camelineae</taxon>
        <taxon>Arabidopsis</taxon>
    </lineage>
</organism>